<protein>
    <recommendedName>
        <fullName>Hemoglobin A subunit alpha-2</fullName>
    </recommendedName>
    <alternativeName>
        <fullName>Hemoglobin A alpha-2 chain</fullName>
    </alternativeName>
</protein>
<name>HBA2_ALDGI</name>
<dbReference type="SMR" id="P83132"/>
<dbReference type="GO" id="GO:0072562">
    <property type="term" value="C:blood microparticle"/>
    <property type="evidence" value="ECO:0007669"/>
    <property type="project" value="TreeGrafter"/>
</dbReference>
<dbReference type="GO" id="GO:0031838">
    <property type="term" value="C:haptoglobin-hemoglobin complex"/>
    <property type="evidence" value="ECO:0007669"/>
    <property type="project" value="TreeGrafter"/>
</dbReference>
<dbReference type="GO" id="GO:0005833">
    <property type="term" value="C:hemoglobin complex"/>
    <property type="evidence" value="ECO:0007669"/>
    <property type="project" value="InterPro"/>
</dbReference>
<dbReference type="GO" id="GO:0031720">
    <property type="term" value="F:haptoglobin binding"/>
    <property type="evidence" value="ECO:0007669"/>
    <property type="project" value="TreeGrafter"/>
</dbReference>
<dbReference type="GO" id="GO:0020037">
    <property type="term" value="F:heme binding"/>
    <property type="evidence" value="ECO:0007669"/>
    <property type="project" value="InterPro"/>
</dbReference>
<dbReference type="GO" id="GO:0005506">
    <property type="term" value="F:iron ion binding"/>
    <property type="evidence" value="ECO:0007669"/>
    <property type="project" value="InterPro"/>
</dbReference>
<dbReference type="GO" id="GO:0043177">
    <property type="term" value="F:organic acid binding"/>
    <property type="evidence" value="ECO:0007669"/>
    <property type="project" value="TreeGrafter"/>
</dbReference>
<dbReference type="GO" id="GO:0019825">
    <property type="term" value="F:oxygen binding"/>
    <property type="evidence" value="ECO:0007669"/>
    <property type="project" value="InterPro"/>
</dbReference>
<dbReference type="GO" id="GO:0005344">
    <property type="term" value="F:oxygen carrier activity"/>
    <property type="evidence" value="ECO:0007669"/>
    <property type="project" value="UniProtKB-KW"/>
</dbReference>
<dbReference type="GO" id="GO:0004601">
    <property type="term" value="F:peroxidase activity"/>
    <property type="evidence" value="ECO:0007669"/>
    <property type="project" value="TreeGrafter"/>
</dbReference>
<dbReference type="GO" id="GO:0042744">
    <property type="term" value="P:hydrogen peroxide catabolic process"/>
    <property type="evidence" value="ECO:0007669"/>
    <property type="project" value="TreeGrafter"/>
</dbReference>
<dbReference type="CDD" id="cd08927">
    <property type="entry name" value="Hb-alpha-like"/>
    <property type="match status" value="1"/>
</dbReference>
<dbReference type="FunFam" id="1.10.490.10:FF:000002">
    <property type="entry name" value="Hemoglobin subunit alpha"/>
    <property type="match status" value="1"/>
</dbReference>
<dbReference type="Gene3D" id="1.10.490.10">
    <property type="entry name" value="Globins"/>
    <property type="match status" value="1"/>
</dbReference>
<dbReference type="InterPro" id="IPR000971">
    <property type="entry name" value="Globin"/>
</dbReference>
<dbReference type="InterPro" id="IPR009050">
    <property type="entry name" value="Globin-like_sf"/>
</dbReference>
<dbReference type="InterPro" id="IPR012292">
    <property type="entry name" value="Globin/Proto"/>
</dbReference>
<dbReference type="InterPro" id="IPR002338">
    <property type="entry name" value="Hemoglobin_a-typ"/>
</dbReference>
<dbReference type="InterPro" id="IPR050056">
    <property type="entry name" value="Hemoglobin_oxygen_transport"/>
</dbReference>
<dbReference type="InterPro" id="IPR002339">
    <property type="entry name" value="Hemoglobin_pi"/>
</dbReference>
<dbReference type="PANTHER" id="PTHR11442">
    <property type="entry name" value="HEMOGLOBIN FAMILY MEMBER"/>
    <property type="match status" value="1"/>
</dbReference>
<dbReference type="PANTHER" id="PTHR11442:SF48">
    <property type="entry name" value="HEMOGLOBIN SUBUNIT ALPHA"/>
    <property type="match status" value="1"/>
</dbReference>
<dbReference type="Pfam" id="PF00042">
    <property type="entry name" value="Globin"/>
    <property type="match status" value="1"/>
</dbReference>
<dbReference type="PRINTS" id="PR00612">
    <property type="entry name" value="ALPHAHAEM"/>
</dbReference>
<dbReference type="PRINTS" id="PR00815">
    <property type="entry name" value="PIHAEM"/>
</dbReference>
<dbReference type="SUPFAM" id="SSF46458">
    <property type="entry name" value="Globin-like"/>
    <property type="match status" value="1"/>
</dbReference>
<dbReference type="PROSITE" id="PS01033">
    <property type="entry name" value="GLOBIN"/>
    <property type="match status" value="1"/>
</dbReference>
<evidence type="ECO:0000250" key="1">
    <source>
        <dbReference type="UniProtKB" id="P07417"/>
    </source>
</evidence>
<evidence type="ECO:0000255" key="2">
    <source>
        <dbReference type="PROSITE-ProRule" id="PRU00238"/>
    </source>
</evidence>
<evidence type="ECO:0000269" key="3">
    <source ref="1"/>
</evidence>
<evidence type="ECO:0000305" key="4"/>
<keyword id="KW-0903">Direct protein sequencing</keyword>
<keyword id="KW-0349">Heme</keyword>
<keyword id="KW-0408">Iron</keyword>
<keyword id="KW-0479">Metal-binding</keyword>
<keyword id="KW-0561">Oxygen transport</keyword>
<keyword id="KW-0813">Transport</keyword>
<comment type="function">
    <text evidence="1">Involved in oxygen transport from the lung to the various peripheral tissues.</text>
</comment>
<comment type="subunit">
    <text evidence="4">Tetramer of alpha-1, alpha-2 and two identical beta chains.</text>
</comment>
<comment type="tissue specificity">
    <text evidence="4">Red blood cells.</text>
</comment>
<comment type="miscellaneous">
    <text evidence="4">Hemoglobin A is the major, and hemoglobin D the minor hemoglobin of this species.</text>
</comment>
<comment type="similarity">
    <text evidence="2">Belongs to the globin family.</text>
</comment>
<sequence>MVLTAGDKANVKTVWSKVGSHLEDYGSETLERLFVVYPSTKTYFPHFDLHHDSPQVRAHGKKVLSALGEAVNHIDDIPGALSKLSDLHAQNLRVDPVNFKLLNLCFVVVVGRHHPTILTPEVHVSLDKFLSAVAQNLTSKYR</sequence>
<organism evidence="4">
    <name type="scientific">Aldabrachelys gigantea</name>
    <name type="common">Aldabra giant tortoise</name>
    <name type="synonym">Geochelone gigantea</name>
    <dbReference type="NCBI Taxonomy" id="167804"/>
    <lineage>
        <taxon>Eukaryota</taxon>
        <taxon>Metazoa</taxon>
        <taxon>Chordata</taxon>
        <taxon>Craniata</taxon>
        <taxon>Vertebrata</taxon>
        <taxon>Euteleostomi</taxon>
        <taxon>Archelosauria</taxon>
        <taxon>Testudinata</taxon>
        <taxon>Testudines</taxon>
        <taxon>Cryptodira</taxon>
        <taxon>Durocryptodira</taxon>
        <taxon>Testudinoidea</taxon>
        <taxon>Testudinidae</taxon>
        <taxon>Aldabrachelys</taxon>
    </lineage>
</organism>
<feature type="initiator methionine" description="Removed" evidence="3">
    <location>
        <position position="1"/>
    </location>
</feature>
<feature type="chain" id="PRO_0000052540" description="Hemoglobin A subunit alpha-2">
    <location>
        <begin position="2"/>
        <end position="142"/>
    </location>
</feature>
<feature type="domain" description="Globin" evidence="2">
    <location>
        <begin position="2"/>
        <end position="142"/>
    </location>
</feature>
<feature type="binding site" evidence="2">
    <location>
        <position position="59"/>
    </location>
    <ligand>
        <name>O2</name>
        <dbReference type="ChEBI" id="CHEBI:15379"/>
    </ligand>
</feature>
<feature type="binding site" description="proximal binding residue" evidence="2">
    <location>
        <position position="88"/>
    </location>
    <ligand>
        <name>heme b</name>
        <dbReference type="ChEBI" id="CHEBI:60344"/>
    </ligand>
    <ligandPart>
        <name>Fe</name>
        <dbReference type="ChEBI" id="CHEBI:18248"/>
    </ligandPart>
</feature>
<reference evidence="4" key="1">
    <citation type="journal article" date="2001" name="Zool. Sci.">
        <title>The amino acid sequences of the alpha- and beta-globin chains of hemoglobin from the Aldabra giant tortoises, Geochelone gigantea.</title>
        <authorList>
            <person name="Shishikura F."/>
            <person name="Takami K."/>
        </authorList>
    </citation>
    <scope>PROTEIN SEQUENCE OF 2-142</scope>
    <source>
        <tissue>Erythrocyte</tissue>
    </source>
</reference>
<accession>P83132</accession>
<proteinExistence type="evidence at protein level"/>